<keyword id="KW-0030">Aminoacyl-tRNA synthetase</keyword>
<keyword id="KW-0067">ATP-binding</keyword>
<keyword id="KW-0963">Cytoplasm</keyword>
<keyword id="KW-0436">Ligase</keyword>
<keyword id="KW-0479">Metal-binding</keyword>
<keyword id="KW-0547">Nucleotide-binding</keyword>
<keyword id="KW-0648">Protein biosynthesis</keyword>
<keyword id="KW-0862">Zinc</keyword>
<feature type="chain" id="PRO_1000199052" description="Cysteine--tRNA ligase">
    <location>
        <begin position="1"/>
        <end position="465"/>
    </location>
</feature>
<feature type="short sequence motif" description="'HIGH' region">
    <location>
        <begin position="29"/>
        <end position="39"/>
    </location>
</feature>
<feature type="short sequence motif" description="'KMSKS' region">
    <location>
        <begin position="264"/>
        <end position="268"/>
    </location>
</feature>
<feature type="binding site" evidence="1">
    <location>
        <position position="27"/>
    </location>
    <ligand>
        <name>Zn(2+)</name>
        <dbReference type="ChEBI" id="CHEBI:29105"/>
    </ligand>
</feature>
<feature type="binding site" evidence="1">
    <location>
        <position position="207"/>
    </location>
    <ligand>
        <name>Zn(2+)</name>
        <dbReference type="ChEBI" id="CHEBI:29105"/>
    </ligand>
</feature>
<feature type="binding site" evidence="1">
    <location>
        <position position="232"/>
    </location>
    <ligand>
        <name>Zn(2+)</name>
        <dbReference type="ChEBI" id="CHEBI:29105"/>
    </ligand>
</feature>
<feature type="binding site" evidence="1">
    <location>
        <position position="236"/>
    </location>
    <ligand>
        <name>Zn(2+)</name>
        <dbReference type="ChEBI" id="CHEBI:29105"/>
    </ligand>
</feature>
<feature type="binding site" evidence="1">
    <location>
        <position position="267"/>
    </location>
    <ligand>
        <name>ATP</name>
        <dbReference type="ChEBI" id="CHEBI:30616"/>
    </ligand>
</feature>
<protein>
    <recommendedName>
        <fullName evidence="1">Cysteine--tRNA ligase</fullName>
        <ecNumber evidence="1">6.1.1.16</ecNumber>
    </recommendedName>
    <alternativeName>
        <fullName evidence="1">Cysteinyl-tRNA synthetase</fullName>
        <shortName evidence="1">CysRS</shortName>
    </alternativeName>
</protein>
<accession>B9DY88</accession>
<comment type="catalytic activity">
    <reaction evidence="1">
        <text>tRNA(Cys) + L-cysteine + ATP = L-cysteinyl-tRNA(Cys) + AMP + diphosphate</text>
        <dbReference type="Rhea" id="RHEA:17773"/>
        <dbReference type="Rhea" id="RHEA-COMP:9661"/>
        <dbReference type="Rhea" id="RHEA-COMP:9679"/>
        <dbReference type="ChEBI" id="CHEBI:30616"/>
        <dbReference type="ChEBI" id="CHEBI:33019"/>
        <dbReference type="ChEBI" id="CHEBI:35235"/>
        <dbReference type="ChEBI" id="CHEBI:78442"/>
        <dbReference type="ChEBI" id="CHEBI:78517"/>
        <dbReference type="ChEBI" id="CHEBI:456215"/>
        <dbReference type="EC" id="6.1.1.16"/>
    </reaction>
</comment>
<comment type="cofactor">
    <cofactor evidence="1">
        <name>Zn(2+)</name>
        <dbReference type="ChEBI" id="CHEBI:29105"/>
    </cofactor>
    <text evidence="1">Binds 1 zinc ion per subunit.</text>
</comment>
<comment type="subunit">
    <text evidence="1">Monomer.</text>
</comment>
<comment type="subcellular location">
    <subcellularLocation>
        <location evidence="1">Cytoplasm</location>
    </subcellularLocation>
</comment>
<comment type="similarity">
    <text evidence="1">Belongs to the class-I aminoacyl-tRNA synthetase family.</text>
</comment>
<evidence type="ECO:0000255" key="1">
    <source>
        <dbReference type="HAMAP-Rule" id="MF_00041"/>
    </source>
</evidence>
<sequence length="465" mass="54017">MRIFNTMTRRKEEFVPLIPGEIKMYVCGPTVYNFFHIGNARTFVVFDTVRRYFEYKGYKVNFVQNFTDIDDKMIKKANDENITVQQLGDRFIDEYYRDADALNIKRATVNPRATLYISKIIEFIQDLIDKGYAYSVDGDVYFNAKKFNNYGKLSGQNIEQLQSGARIDIDERKKNPMDFAVWKSEKKGEPSWESPWGMGRPGWHIECSCMAYNILGETIDIHAGGSDLKFPHHENEIAQSEGRTGKVFAKYWMHSAFVNINNQKMSKSLNNFFTTREILDKYEPDVIRLFMLSGHYRTPINFSIELLDSTKSALDRICNSIINLEELSSKVKNDGILDSEIKYKEHLNSYKQRYIEKMDDDFNTADAISVIFDLIRDINTNIDENSSMEIIKYSLALIRELGSPLGILQKSKRGSIETEVELLIEKRQKARKDKNWALADKIRDDLKDKGIILEDTSDGVRWKRV</sequence>
<name>SYC_CLOK1</name>
<reference key="1">
    <citation type="submission" date="2005-09" db="EMBL/GenBank/DDBJ databases">
        <title>Complete genome sequence of Clostridium kluyveri and comparative genomics of Clostridia species.</title>
        <authorList>
            <person name="Inui M."/>
            <person name="Nonaka H."/>
            <person name="Shinoda Y."/>
            <person name="Ikenaga Y."/>
            <person name="Abe M."/>
            <person name="Naito K."/>
            <person name="Vertes A.A."/>
            <person name="Yukawa H."/>
        </authorList>
    </citation>
    <scope>NUCLEOTIDE SEQUENCE [LARGE SCALE GENOMIC DNA]</scope>
    <source>
        <strain>NBRC 12016</strain>
    </source>
</reference>
<gene>
    <name evidence="1" type="primary">cysS</name>
    <name type="ordered locus">CKR_0162</name>
</gene>
<organism>
    <name type="scientific">Clostridium kluyveri (strain NBRC 12016)</name>
    <dbReference type="NCBI Taxonomy" id="583346"/>
    <lineage>
        <taxon>Bacteria</taxon>
        <taxon>Bacillati</taxon>
        <taxon>Bacillota</taxon>
        <taxon>Clostridia</taxon>
        <taxon>Eubacteriales</taxon>
        <taxon>Clostridiaceae</taxon>
        <taxon>Clostridium</taxon>
    </lineage>
</organism>
<dbReference type="EC" id="6.1.1.16" evidence="1"/>
<dbReference type="EMBL" id="AP009049">
    <property type="protein sequence ID" value="BAH05213.1"/>
    <property type="molecule type" value="Genomic_DNA"/>
</dbReference>
<dbReference type="RefSeq" id="WP_011988783.1">
    <property type="nucleotide sequence ID" value="NC_011837.1"/>
</dbReference>
<dbReference type="SMR" id="B9DY88"/>
<dbReference type="KEGG" id="ckr:CKR_0162"/>
<dbReference type="HOGENOM" id="CLU_013528_0_1_9"/>
<dbReference type="Proteomes" id="UP000007969">
    <property type="component" value="Chromosome"/>
</dbReference>
<dbReference type="GO" id="GO:0005829">
    <property type="term" value="C:cytosol"/>
    <property type="evidence" value="ECO:0007669"/>
    <property type="project" value="TreeGrafter"/>
</dbReference>
<dbReference type="GO" id="GO:0005524">
    <property type="term" value="F:ATP binding"/>
    <property type="evidence" value="ECO:0007669"/>
    <property type="project" value="UniProtKB-UniRule"/>
</dbReference>
<dbReference type="GO" id="GO:0004817">
    <property type="term" value="F:cysteine-tRNA ligase activity"/>
    <property type="evidence" value="ECO:0007669"/>
    <property type="project" value="UniProtKB-UniRule"/>
</dbReference>
<dbReference type="GO" id="GO:0008270">
    <property type="term" value="F:zinc ion binding"/>
    <property type="evidence" value="ECO:0007669"/>
    <property type="project" value="UniProtKB-UniRule"/>
</dbReference>
<dbReference type="GO" id="GO:0006423">
    <property type="term" value="P:cysteinyl-tRNA aminoacylation"/>
    <property type="evidence" value="ECO:0007669"/>
    <property type="project" value="UniProtKB-UniRule"/>
</dbReference>
<dbReference type="CDD" id="cd00672">
    <property type="entry name" value="CysRS_core"/>
    <property type="match status" value="1"/>
</dbReference>
<dbReference type="FunFam" id="3.40.50.620:FF:000009">
    <property type="entry name" value="Cysteine--tRNA ligase"/>
    <property type="match status" value="1"/>
</dbReference>
<dbReference type="Gene3D" id="1.20.120.1910">
    <property type="entry name" value="Cysteine-tRNA ligase, C-terminal anti-codon recognition domain"/>
    <property type="match status" value="1"/>
</dbReference>
<dbReference type="Gene3D" id="3.40.50.620">
    <property type="entry name" value="HUPs"/>
    <property type="match status" value="1"/>
</dbReference>
<dbReference type="HAMAP" id="MF_00041">
    <property type="entry name" value="Cys_tRNA_synth"/>
    <property type="match status" value="1"/>
</dbReference>
<dbReference type="InterPro" id="IPR015803">
    <property type="entry name" value="Cys-tRNA-ligase"/>
</dbReference>
<dbReference type="InterPro" id="IPR015273">
    <property type="entry name" value="Cys-tRNA-synt_Ia_DALR"/>
</dbReference>
<dbReference type="InterPro" id="IPR024909">
    <property type="entry name" value="Cys-tRNA/MSH_ligase"/>
</dbReference>
<dbReference type="InterPro" id="IPR056411">
    <property type="entry name" value="CysS_C"/>
</dbReference>
<dbReference type="InterPro" id="IPR014729">
    <property type="entry name" value="Rossmann-like_a/b/a_fold"/>
</dbReference>
<dbReference type="InterPro" id="IPR032678">
    <property type="entry name" value="tRNA-synt_1_cat_dom"/>
</dbReference>
<dbReference type="InterPro" id="IPR009080">
    <property type="entry name" value="tRNAsynth_Ia_anticodon-bd"/>
</dbReference>
<dbReference type="NCBIfam" id="TIGR00435">
    <property type="entry name" value="cysS"/>
    <property type="match status" value="1"/>
</dbReference>
<dbReference type="PANTHER" id="PTHR10890:SF3">
    <property type="entry name" value="CYSTEINE--TRNA LIGASE, CYTOPLASMIC"/>
    <property type="match status" value="1"/>
</dbReference>
<dbReference type="PANTHER" id="PTHR10890">
    <property type="entry name" value="CYSTEINYL-TRNA SYNTHETASE"/>
    <property type="match status" value="1"/>
</dbReference>
<dbReference type="Pfam" id="PF23493">
    <property type="entry name" value="CysS_C"/>
    <property type="match status" value="1"/>
</dbReference>
<dbReference type="Pfam" id="PF09190">
    <property type="entry name" value="DALR_2"/>
    <property type="match status" value="1"/>
</dbReference>
<dbReference type="Pfam" id="PF01406">
    <property type="entry name" value="tRNA-synt_1e"/>
    <property type="match status" value="1"/>
</dbReference>
<dbReference type="PRINTS" id="PR00983">
    <property type="entry name" value="TRNASYNTHCYS"/>
</dbReference>
<dbReference type="SMART" id="SM00840">
    <property type="entry name" value="DALR_2"/>
    <property type="match status" value="1"/>
</dbReference>
<dbReference type="SUPFAM" id="SSF47323">
    <property type="entry name" value="Anticodon-binding domain of a subclass of class I aminoacyl-tRNA synthetases"/>
    <property type="match status" value="1"/>
</dbReference>
<dbReference type="SUPFAM" id="SSF52374">
    <property type="entry name" value="Nucleotidylyl transferase"/>
    <property type="match status" value="1"/>
</dbReference>
<proteinExistence type="inferred from homology"/>